<organism>
    <name type="scientific">Prochlorococcus marinus (strain MIT 9313)</name>
    <dbReference type="NCBI Taxonomy" id="74547"/>
    <lineage>
        <taxon>Bacteria</taxon>
        <taxon>Bacillati</taxon>
        <taxon>Cyanobacteriota</taxon>
        <taxon>Cyanophyceae</taxon>
        <taxon>Synechococcales</taxon>
        <taxon>Prochlorococcaceae</taxon>
        <taxon>Prochlorococcus</taxon>
    </lineage>
</organism>
<reference key="1">
    <citation type="journal article" date="2003" name="Nature">
        <title>Genome divergence in two Prochlorococcus ecotypes reflects oceanic niche differentiation.</title>
        <authorList>
            <person name="Rocap G."/>
            <person name="Larimer F.W."/>
            <person name="Lamerdin J.E."/>
            <person name="Malfatti S."/>
            <person name="Chain P."/>
            <person name="Ahlgren N.A."/>
            <person name="Arellano A."/>
            <person name="Coleman M."/>
            <person name="Hauser L."/>
            <person name="Hess W.R."/>
            <person name="Johnson Z.I."/>
            <person name="Land M.L."/>
            <person name="Lindell D."/>
            <person name="Post A.F."/>
            <person name="Regala W."/>
            <person name="Shah M."/>
            <person name="Shaw S.L."/>
            <person name="Steglich C."/>
            <person name="Sullivan M.B."/>
            <person name="Ting C.S."/>
            <person name="Tolonen A."/>
            <person name="Webb E.A."/>
            <person name="Zinser E.R."/>
            <person name="Chisholm S.W."/>
        </authorList>
    </citation>
    <scope>NUCLEOTIDE SEQUENCE [LARGE SCALE GENOMIC DNA]</scope>
    <source>
        <strain>MIT 9313</strain>
    </source>
</reference>
<accession>Q7V8X7</accession>
<keyword id="KW-0028">Amino-acid biosynthesis</keyword>
<keyword id="KW-0057">Aromatic amino acid biosynthesis</keyword>
<keyword id="KW-0456">Lyase</keyword>
<keyword id="KW-1185">Reference proteome</keyword>
<name>AROQ_PROMM</name>
<proteinExistence type="inferred from homology"/>
<comment type="function">
    <text evidence="1">Catalyzes a trans-dehydration via an enolate intermediate.</text>
</comment>
<comment type="catalytic activity">
    <reaction evidence="1">
        <text>3-dehydroquinate = 3-dehydroshikimate + H2O</text>
        <dbReference type="Rhea" id="RHEA:21096"/>
        <dbReference type="ChEBI" id="CHEBI:15377"/>
        <dbReference type="ChEBI" id="CHEBI:16630"/>
        <dbReference type="ChEBI" id="CHEBI:32364"/>
        <dbReference type="EC" id="4.2.1.10"/>
    </reaction>
</comment>
<comment type="pathway">
    <text evidence="1">Metabolic intermediate biosynthesis; chorismate biosynthesis; chorismate from D-erythrose 4-phosphate and phosphoenolpyruvate: step 3/7.</text>
</comment>
<comment type="subunit">
    <text evidence="1">Homododecamer.</text>
</comment>
<comment type="similarity">
    <text evidence="1">Belongs to the type-II 3-dehydroquinase family.</text>
</comment>
<evidence type="ECO:0000255" key="1">
    <source>
        <dbReference type="HAMAP-Rule" id="MF_00169"/>
    </source>
</evidence>
<gene>
    <name evidence="1" type="primary">aroQ</name>
    <name type="synonym">aroD</name>
    <name type="ordered locus">PMT_0195</name>
</gene>
<sequence length="149" mass="16123">MRLLLLNGPNLNLLGQREPGFYGAMTLKAIEADLLAQAEAEAVQLECFQSNFEGALVDQIHQAIGQVQGILINAGAYTHTSIALRDALLGAAIPYVELHLSNTHAREGFRHHSYLADRAVGVVSGFGALSYRLALEGLLAHLRQPQQVL</sequence>
<feature type="chain" id="PRO_0000159916" description="3-dehydroquinate dehydratase">
    <location>
        <begin position="1"/>
        <end position="149"/>
    </location>
</feature>
<feature type="active site" description="Proton acceptor" evidence="1">
    <location>
        <position position="22"/>
    </location>
</feature>
<feature type="active site" description="Proton donor" evidence="1">
    <location>
        <position position="99"/>
    </location>
</feature>
<feature type="binding site" evidence="1">
    <location>
        <position position="73"/>
    </location>
    <ligand>
        <name>substrate</name>
    </ligand>
</feature>
<feature type="binding site" evidence="1">
    <location>
        <position position="79"/>
    </location>
    <ligand>
        <name>substrate</name>
    </ligand>
</feature>
<feature type="binding site" evidence="1">
    <location>
        <position position="86"/>
    </location>
    <ligand>
        <name>substrate</name>
    </ligand>
</feature>
<feature type="binding site" evidence="1">
    <location>
        <begin position="100"/>
        <end position="101"/>
    </location>
    <ligand>
        <name>substrate</name>
    </ligand>
</feature>
<feature type="binding site" evidence="1">
    <location>
        <position position="110"/>
    </location>
    <ligand>
        <name>substrate</name>
    </ligand>
</feature>
<feature type="site" description="Transition state stabilizer" evidence="1">
    <location>
        <position position="17"/>
    </location>
</feature>
<dbReference type="EC" id="4.2.1.10" evidence="1"/>
<dbReference type="EMBL" id="BX548175">
    <property type="protein sequence ID" value="CAE20370.1"/>
    <property type="molecule type" value="Genomic_DNA"/>
</dbReference>
<dbReference type="RefSeq" id="WP_011129574.1">
    <property type="nucleotide sequence ID" value="NC_005071.1"/>
</dbReference>
<dbReference type="SMR" id="Q7V8X7"/>
<dbReference type="KEGG" id="pmt:PMT_0195"/>
<dbReference type="eggNOG" id="COG0757">
    <property type="taxonomic scope" value="Bacteria"/>
</dbReference>
<dbReference type="HOGENOM" id="CLU_090968_1_0_3"/>
<dbReference type="OrthoDB" id="9790793at2"/>
<dbReference type="UniPathway" id="UPA00053">
    <property type="reaction ID" value="UER00086"/>
</dbReference>
<dbReference type="Proteomes" id="UP000001423">
    <property type="component" value="Chromosome"/>
</dbReference>
<dbReference type="GO" id="GO:0003855">
    <property type="term" value="F:3-dehydroquinate dehydratase activity"/>
    <property type="evidence" value="ECO:0007669"/>
    <property type="project" value="UniProtKB-UniRule"/>
</dbReference>
<dbReference type="GO" id="GO:0008652">
    <property type="term" value="P:amino acid biosynthetic process"/>
    <property type="evidence" value="ECO:0007669"/>
    <property type="project" value="UniProtKB-KW"/>
</dbReference>
<dbReference type="GO" id="GO:0009073">
    <property type="term" value="P:aromatic amino acid family biosynthetic process"/>
    <property type="evidence" value="ECO:0007669"/>
    <property type="project" value="UniProtKB-KW"/>
</dbReference>
<dbReference type="GO" id="GO:0009423">
    <property type="term" value="P:chorismate biosynthetic process"/>
    <property type="evidence" value="ECO:0007669"/>
    <property type="project" value="UniProtKB-UniRule"/>
</dbReference>
<dbReference type="GO" id="GO:0019631">
    <property type="term" value="P:quinate catabolic process"/>
    <property type="evidence" value="ECO:0007669"/>
    <property type="project" value="TreeGrafter"/>
</dbReference>
<dbReference type="CDD" id="cd00466">
    <property type="entry name" value="DHQase_II"/>
    <property type="match status" value="1"/>
</dbReference>
<dbReference type="Gene3D" id="3.40.50.9100">
    <property type="entry name" value="Dehydroquinase, class II"/>
    <property type="match status" value="1"/>
</dbReference>
<dbReference type="HAMAP" id="MF_00169">
    <property type="entry name" value="AroQ"/>
    <property type="match status" value="1"/>
</dbReference>
<dbReference type="InterPro" id="IPR001874">
    <property type="entry name" value="DHquinase_II"/>
</dbReference>
<dbReference type="InterPro" id="IPR018509">
    <property type="entry name" value="DHquinase_II_CS"/>
</dbReference>
<dbReference type="InterPro" id="IPR036441">
    <property type="entry name" value="DHquinase_II_sf"/>
</dbReference>
<dbReference type="NCBIfam" id="TIGR01088">
    <property type="entry name" value="aroQ"/>
    <property type="match status" value="1"/>
</dbReference>
<dbReference type="NCBIfam" id="NF003804">
    <property type="entry name" value="PRK05395.1-1"/>
    <property type="match status" value="1"/>
</dbReference>
<dbReference type="NCBIfam" id="NF003805">
    <property type="entry name" value="PRK05395.1-2"/>
    <property type="match status" value="1"/>
</dbReference>
<dbReference type="NCBIfam" id="NF003806">
    <property type="entry name" value="PRK05395.1-3"/>
    <property type="match status" value="1"/>
</dbReference>
<dbReference type="NCBIfam" id="NF003807">
    <property type="entry name" value="PRK05395.1-4"/>
    <property type="match status" value="1"/>
</dbReference>
<dbReference type="PANTHER" id="PTHR21272">
    <property type="entry name" value="CATABOLIC 3-DEHYDROQUINASE"/>
    <property type="match status" value="1"/>
</dbReference>
<dbReference type="PANTHER" id="PTHR21272:SF3">
    <property type="entry name" value="CATABOLIC 3-DEHYDROQUINASE"/>
    <property type="match status" value="1"/>
</dbReference>
<dbReference type="Pfam" id="PF01220">
    <property type="entry name" value="DHquinase_II"/>
    <property type="match status" value="1"/>
</dbReference>
<dbReference type="PIRSF" id="PIRSF001399">
    <property type="entry name" value="DHquinase_II"/>
    <property type="match status" value="1"/>
</dbReference>
<dbReference type="SUPFAM" id="SSF52304">
    <property type="entry name" value="Type II 3-dehydroquinate dehydratase"/>
    <property type="match status" value="1"/>
</dbReference>
<dbReference type="PROSITE" id="PS01029">
    <property type="entry name" value="DEHYDROQUINASE_II"/>
    <property type="match status" value="1"/>
</dbReference>
<protein>
    <recommendedName>
        <fullName evidence="1">3-dehydroquinate dehydratase</fullName>
        <shortName evidence="1">3-dehydroquinase</shortName>
        <ecNumber evidence="1">4.2.1.10</ecNumber>
    </recommendedName>
    <alternativeName>
        <fullName evidence="1">Type II DHQase</fullName>
    </alternativeName>
</protein>